<gene>
    <name type="primary">RAE1</name>
    <name type="synonym">MRNP41</name>
</gene>
<evidence type="ECO:0000250" key="1">
    <source>
        <dbReference type="UniProtKB" id="P78406"/>
    </source>
</evidence>
<evidence type="ECO:0000256" key="2">
    <source>
        <dbReference type="SAM" id="MobiDB-lite"/>
    </source>
</evidence>
<evidence type="ECO:0000305" key="3"/>
<accession>A5GFN6</accession>
<protein>
    <recommendedName>
        <fullName>mRNA export factor</fullName>
    </recommendedName>
    <alternativeName>
        <fullName>Rae1 protein homolog</fullName>
    </alternativeName>
    <alternativeName>
        <fullName>mRNA-associated protein mrnp 41</fullName>
    </alternativeName>
</protein>
<reference key="1">
    <citation type="submission" date="2007-05" db="EMBL/GenBank/DDBJ databases">
        <authorList>
            <consortium name="Porcine genome sequencing project"/>
        </authorList>
    </citation>
    <scope>NUCLEOTIDE SEQUENCE [LARGE SCALE GENOMIC DNA]</scope>
</reference>
<name>RAEL1_PIG</name>
<dbReference type="EMBL" id="CR956362">
    <property type="protein sequence ID" value="CAN13252.1"/>
    <property type="molecule type" value="Genomic_DNA"/>
</dbReference>
<dbReference type="RefSeq" id="NP_001098766.1">
    <property type="nucleotide sequence ID" value="NM_001105296.1"/>
</dbReference>
<dbReference type="RefSeq" id="XP_005673094.1">
    <property type="nucleotide sequence ID" value="XM_005673037.3"/>
</dbReference>
<dbReference type="RefSeq" id="XP_005673095.1">
    <property type="nucleotide sequence ID" value="XM_005673038.2"/>
</dbReference>
<dbReference type="SMR" id="A5GFN6"/>
<dbReference type="FunCoup" id="A5GFN6">
    <property type="interactions" value="3770"/>
</dbReference>
<dbReference type="STRING" id="9823.ENSSSCP00000030930"/>
<dbReference type="PaxDb" id="9823-ENSSSCP00000007996"/>
<dbReference type="PeptideAtlas" id="A5GFN6"/>
<dbReference type="Ensembl" id="ENSSSCT00000036296.4">
    <property type="protein sequence ID" value="ENSSSCP00000030930.1"/>
    <property type="gene ID" value="ENSSSCG00000007503.6"/>
</dbReference>
<dbReference type="Ensembl" id="ENSSSCT00015006275.1">
    <property type="protein sequence ID" value="ENSSSCP00015002591.1"/>
    <property type="gene ID" value="ENSSSCG00015004659.1"/>
</dbReference>
<dbReference type="Ensembl" id="ENSSSCT00015006295.1">
    <property type="protein sequence ID" value="ENSSSCP00015002599.1"/>
    <property type="gene ID" value="ENSSSCG00015004659.1"/>
</dbReference>
<dbReference type="Ensembl" id="ENSSSCT00025103662.1">
    <property type="protein sequence ID" value="ENSSSCP00025045946.1"/>
    <property type="gene ID" value="ENSSSCG00025075180.1"/>
</dbReference>
<dbReference type="Ensembl" id="ENSSSCT00030055099.1">
    <property type="protein sequence ID" value="ENSSSCP00030025169.1"/>
    <property type="gene ID" value="ENSSSCG00030039559.1"/>
</dbReference>
<dbReference type="Ensembl" id="ENSSSCT00035059757.1">
    <property type="protein sequence ID" value="ENSSSCP00035024028.1"/>
    <property type="gene ID" value="ENSSSCG00035044970.1"/>
</dbReference>
<dbReference type="Ensembl" id="ENSSSCT00040012431.1">
    <property type="protein sequence ID" value="ENSSSCP00040004663.1"/>
    <property type="gene ID" value="ENSSSCG00040009590.1"/>
</dbReference>
<dbReference type="Ensembl" id="ENSSSCT00045032038.1">
    <property type="protein sequence ID" value="ENSSSCP00045022188.1"/>
    <property type="gene ID" value="ENSSSCG00045018813.1"/>
</dbReference>
<dbReference type="Ensembl" id="ENSSSCT00050054925.1">
    <property type="protein sequence ID" value="ENSSSCP00050023224.1"/>
    <property type="gene ID" value="ENSSSCG00050040586.1"/>
</dbReference>
<dbReference type="Ensembl" id="ENSSSCT00055017640.1">
    <property type="protein sequence ID" value="ENSSSCP00055013945.1"/>
    <property type="gene ID" value="ENSSSCG00055009019.1"/>
</dbReference>
<dbReference type="Ensembl" id="ENSSSCT00060055580.1">
    <property type="protein sequence ID" value="ENSSSCP00060023735.1"/>
    <property type="gene ID" value="ENSSSCG00060040949.1"/>
</dbReference>
<dbReference type="Ensembl" id="ENSSSCT00065097339.1">
    <property type="protein sequence ID" value="ENSSSCP00065042646.1"/>
    <property type="gene ID" value="ENSSSCG00065070847.1"/>
</dbReference>
<dbReference type="Ensembl" id="ENSSSCT00070037025.1">
    <property type="protein sequence ID" value="ENSSSCP00070030963.1"/>
    <property type="gene ID" value="ENSSSCG00070018757.1"/>
</dbReference>
<dbReference type="Ensembl" id="ENSSSCT00070037044.1">
    <property type="protein sequence ID" value="ENSSSCP00070030981.1"/>
    <property type="gene ID" value="ENSSSCG00070018757.1"/>
</dbReference>
<dbReference type="Ensembl" id="ENSSSCT00085047376">
    <property type="protein sequence ID" value="ENSSSCP00085033058"/>
    <property type="gene ID" value="ENSSSCG00085024704"/>
</dbReference>
<dbReference type="Ensembl" id="ENSSSCT00090005106">
    <property type="protein sequence ID" value="ENSSSCP00090003194"/>
    <property type="gene ID" value="ENSSSCG00090002933"/>
</dbReference>
<dbReference type="Ensembl" id="ENSSSCT00110053167">
    <property type="protein sequence ID" value="ENSSSCP00110037124"/>
    <property type="gene ID" value="ENSSSCG00110027683"/>
</dbReference>
<dbReference type="Ensembl" id="ENSSSCT00115018174">
    <property type="protein sequence ID" value="ENSSSCP00115017165"/>
    <property type="gene ID" value="ENSSSCG00115010556"/>
</dbReference>
<dbReference type="Ensembl" id="ENSSSCT00130024153">
    <property type="protein sequence ID" value="ENSSSCP00130018343"/>
    <property type="gene ID" value="ENSSSCG00130012341"/>
</dbReference>
<dbReference type="GeneID" id="100125839"/>
<dbReference type="KEGG" id="ssc:100125839"/>
<dbReference type="CTD" id="8480"/>
<dbReference type="VGNC" id="VGNC:96528">
    <property type="gene designation" value="RAE1"/>
</dbReference>
<dbReference type="eggNOG" id="KOG0647">
    <property type="taxonomic scope" value="Eukaryota"/>
</dbReference>
<dbReference type="GeneTree" id="ENSGT00950000183091"/>
<dbReference type="HOGENOM" id="CLU_038526_1_0_1"/>
<dbReference type="InParanoid" id="A5GFN6"/>
<dbReference type="OMA" id="EAMDQSI"/>
<dbReference type="OrthoDB" id="256303at2759"/>
<dbReference type="TreeFam" id="TF105481"/>
<dbReference type="Reactome" id="R-SSC-159227">
    <property type="pathway name" value="Transport of the SLBP independent Mature mRNA"/>
</dbReference>
<dbReference type="Reactome" id="R-SSC-159230">
    <property type="pathway name" value="Transport of the SLBP Dependant Mature mRNA"/>
</dbReference>
<dbReference type="Reactome" id="R-SSC-159231">
    <property type="pathway name" value="Transport of Mature mRNA Derived from an Intronless Transcript"/>
</dbReference>
<dbReference type="Reactome" id="R-SSC-159236">
    <property type="pathway name" value="Transport of Mature mRNA derived from an Intron-Containing Transcript"/>
</dbReference>
<dbReference type="Reactome" id="R-SSC-191859">
    <property type="pathway name" value="snRNP Assembly"/>
</dbReference>
<dbReference type="Reactome" id="R-SSC-3108214">
    <property type="pathway name" value="SUMOylation of DNA damage response and repair proteins"/>
</dbReference>
<dbReference type="Reactome" id="R-SSC-3232142">
    <property type="pathway name" value="SUMOylation of ubiquitinylation proteins"/>
</dbReference>
<dbReference type="Reactome" id="R-SSC-3301854">
    <property type="pathway name" value="Nuclear Pore Complex (NPC) Disassembly"/>
</dbReference>
<dbReference type="Reactome" id="R-SSC-3371453">
    <property type="pathway name" value="Regulation of HSF1-mediated heat shock response"/>
</dbReference>
<dbReference type="Reactome" id="R-SSC-4085377">
    <property type="pathway name" value="SUMOylation of SUMOylation proteins"/>
</dbReference>
<dbReference type="Reactome" id="R-SSC-4551638">
    <property type="pathway name" value="SUMOylation of chromatin organization proteins"/>
</dbReference>
<dbReference type="Reactome" id="R-SSC-4570464">
    <property type="pathway name" value="SUMOylation of RNA binding proteins"/>
</dbReference>
<dbReference type="Reactome" id="R-SSC-4615885">
    <property type="pathway name" value="SUMOylation of DNA replication proteins"/>
</dbReference>
<dbReference type="Reactome" id="R-SSC-5578749">
    <property type="pathway name" value="Transcriptional regulation by small RNAs"/>
</dbReference>
<dbReference type="Proteomes" id="UP000008227">
    <property type="component" value="Chromosome 17"/>
</dbReference>
<dbReference type="Proteomes" id="UP000314985">
    <property type="component" value="Chromosome 17"/>
</dbReference>
<dbReference type="Proteomes" id="UP000694570">
    <property type="component" value="Unplaced"/>
</dbReference>
<dbReference type="Proteomes" id="UP000694571">
    <property type="component" value="Unplaced"/>
</dbReference>
<dbReference type="Proteomes" id="UP000694720">
    <property type="component" value="Unplaced"/>
</dbReference>
<dbReference type="Proteomes" id="UP000694722">
    <property type="component" value="Unplaced"/>
</dbReference>
<dbReference type="Proteomes" id="UP000694723">
    <property type="component" value="Unplaced"/>
</dbReference>
<dbReference type="Proteomes" id="UP000694724">
    <property type="component" value="Unplaced"/>
</dbReference>
<dbReference type="Proteomes" id="UP000694725">
    <property type="component" value="Unplaced"/>
</dbReference>
<dbReference type="Proteomes" id="UP000694726">
    <property type="component" value="Unplaced"/>
</dbReference>
<dbReference type="Proteomes" id="UP000694727">
    <property type="component" value="Unplaced"/>
</dbReference>
<dbReference type="Proteomes" id="UP000694728">
    <property type="component" value="Unplaced"/>
</dbReference>
<dbReference type="Bgee" id="ENSSSCG00000007503">
    <property type="expression patterns" value="Expressed in oocyte and 43 other cell types or tissues"/>
</dbReference>
<dbReference type="ExpressionAtlas" id="A5GFN6">
    <property type="expression patterns" value="baseline and differential"/>
</dbReference>
<dbReference type="GO" id="GO:0005737">
    <property type="term" value="C:cytoplasm"/>
    <property type="evidence" value="ECO:0007669"/>
    <property type="project" value="UniProtKB-SubCell"/>
</dbReference>
<dbReference type="GO" id="GO:0001650">
    <property type="term" value="C:fibrillar center"/>
    <property type="evidence" value="ECO:0007669"/>
    <property type="project" value="Ensembl"/>
</dbReference>
<dbReference type="GO" id="GO:0097431">
    <property type="term" value="C:mitotic spindle pole"/>
    <property type="evidence" value="ECO:0000250"/>
    <property type="project" value="UniProtKB"/>
</dbReference>
<dbReference type="GO" id="GO:0005643">
    <property type="term" value="C:nuclear pore"/>
    <property type="evidence" value="ECO:0000318"/>
    <property type="project" value="GO_Central"/>
</dbReference>
<dbReference type="GO" id="GO:0005654">
    <property type="term" value="C:nucleoplasm"/>
    <property type="evidence" value="ECO:0007669"/>
    <property type="project" value="Ensembl"/>
</dbReference>
<dbReference type="GO" id="GO:0003723">
    <property type="term" value="F:RNA binding"/>
    <property type="evidence" value="ECO:0000318"/>
    <property type="project" value="GO_Central"/>
</dbReference>
<dbReference type="GO" id="GO:0043130">
    <property type="term" value="F:ubiquitin binding"/>
    <property type="evidence" value="ECO:0000318"/>
    <property type="project" value="GO_Central"/>
</dbReference>
<dbReference type="GO" id="GO:0051301">
    <property type="term" value="P:cell division"/>
    <property type="evidence" value="ECO:0007669"/>
    <property type="project" value="UniProtKB-KW"/>
</dbReference>
<dbReference type="GO" id="GO:0060236">
    <property type="term" value="P:regulation of mitotic spindle organization"/>
    <property type="evidence" value="ECO:0000250"/>
    <property type="project" value="UniProtKB"/>
</dbReference>
<dbReference type="GO" id="GO:0006405">
    <property type="term" value="P:RNA export from nucleus"/>
    <property type="evidence" value="ECO:0000318"/>
    <property type="project" value="GO_Central"/>
</dbReference>
<dbReference type="GO" id="GO:0000972">
    <property type="term" value="P:transcription-dependent tethering of RNA polymerase II gene DNA at nuclear periphery"/>
    <property type="evidence" value="ECO:0000318"/>
    <property type="project" value="GO_Central"/>
</dbReference>
<dbReference type="FunFam" id="2.130.10.10:FF:000084">
    <property type="entry name" value="mRNA export factor"/>
    <property type="match status" value="1"/>
</dbReference>
<dbReference type="Gene3D" id="2.130.10.10">
    <property type="entry name" value="YVTN repeat-like/Quinoprotein amine dehydrogenase"/>
    <property type="match status" value="1"/>
</dbReference>
<dbReference type="InterPro" id="IPR020472">
    <property type="entry name" value="G-protein_beta_WD-40_rep"/>
</dbReference>
<dbReference type="InterPro" id="IPR015943">
    <property type="entry name" value="WD40/YVTN_repeat-like_dom_sf"/>
</dbReference>
<dbReference type="InterPro" id="IPR019775">
    <property type="entry name" value="WD40_repeat_CS"/>
</dbReference>
<dbReference type="InterPro" id="IPR036322">
    <property type="entry name" value="WD40_repeat_dom_sf"/>
</dbReference>
<dbReference type="InterPro" id="IPR001680">
    <property type="entry name" value="WD40_rpt"/>
</dbReference>
<dbReference type="PANTHER" id="PTHR10971">
    <property type="entry name" value="MRNA EXPORT FACTOR AND BUB3"/>
    <property type="match status" value="1"/>
</dbReference>
<dbReference type="Pfam" id="PF00400">
    <property type="entry name" value="WD40"/>
    <property type="match status" value="3"/>
</dbReference>
<dbReference type="PRINTS" id="PR00320">
    <property type="entry name" value="GPROTEINBRPT"/>
</dbReference>
<dbReference type="SMART" id="SM00320">
    <property type="entry name" value="WD40"/>
    <property type="match status" value="4"/>
</dbReference>
<dbReference type="SUPFAM" id="SSF50978">
    <property type="entry name" value="WD40 repeat-like"/>
    <property type="match status" value="1"/>
</dbReference>
<dbReference type="PROSITE" id="PS00678">
    <property type="entry name" value="WD_REPEATS_1"/>
    <property type="match status" value="2"/>
</dbReference>
<dbReference type="PROSITE" id="PS50082">
    <property type="entry name" value="WD_REPEATS_2"/>
    <property type="match status" value="3"/>
</dbReference>
<dbReference type="PROSITE" id="PS50294">
    <property type="entry name" value="WD_REPEATS_REGION"/>
    <property type="match status" value="1"/>
</dbReference>
<organism>
    <name type="scientific">Sus scrofa</name>
    <name type="common">Pig</name>
    <dbReference type="NCBI Taxonomy" id="9823"/>
    <lineage>
        <taxon>Eukaryota</taxon>
        <taxon>Metazoa</taxon>
        <taxon>Chordata</taxon>
        <taxon>Craniata</taxon>
        <taxon>Vertebrata</taxon>
        <taxon>Euteleostomi</taxon>
        <taxon>Mammalia</taxon>
        <taxon>Eutheria</taxon>
        <taxon>Laurasiatheria</taxon>
        <taxon>Artiodactyla</taxon>
        <taxon>Suina</taxon>
        <taxon>Suidae</taxon>
        <taxon>Sus</taxon>
    </lineage>
</organism>
<feature type="chain" id="PRO_0000312980" description="mRNA export factor">
    <location>
        <begin position="1"/>
        <end position="368"/>
    </location>
</feature>
<feature type="repeat" description="WD 1">
    <location>
        <begin position="37"/>
        <end position="79"/>
    </location>
</feature>
<feature type="repeat" description="WD 2">
    <location>
        <begin position="84"/>
        <end position="114"/>
    </location>
</feature>
<feature type="repeat" description="WD 3">
    <location>
        <begin position="125"/>
        <end position="157"/>
    </location>
</feature>
<feature type="repeat" description="WD 4">
    <location>
        <begin position="168"/>
        <end position="206"/>
    </location>
</feature>
<feature type="repeat" description="WD 5">
    <location>
        <begin position="215"/>
        <end position="255"/>
    </location>
</feature>
<feature type="repeat" description="WD 6">
    <location>
        <begin position="271"/>
        <end position="301"/>
    </location>
</feature>
<feature type="repeat" description="WD 7">
    <location>
        <begin position="310"/>
        <end position="346"/>
    </location>
</feature>
<feature type="region of interest" description="Disordered" evidence="2">
    <location>
        <begin position="15"/>
        <end position="34"/>
    </location>
</feature>
<feature type="modified residue" description="Phosphothreonine" evidence="1">
    <location>
        <position position="229"/>
    </location>
</feature>
<proteinExistence type="inferred from homology"/>
<sequence>MSLFGTTSGFGTSGTSMFGSTTTDNHNPMKDIEVTSSPDDSIGCLSFSPPTLPGNFLIAGSWANDVRCWEVQDSGQTIPKAQQMHTGPVLDVCWSDDGSKVFTASCDKTAKMWDLNSNQAIQIAQHDAPVKTIHWIKAPNYSCVMTGSWDKTLKFWDTRSSNPMMVLQLPERCYCADVIYPMAVVATAERGLIVYQLENQPSEFRRIESPLKHQHRCVAIFKDKQNKPTGFALGSIEGRVAIHYINPPNPAKDNFTFKCHRSNGTNTSAPQDIYAVNGIAFHPVHGTLATVGSDGRFSFWDKDARTKLKTSEQLDQPISACCFNHNGNIFAYASSYDWSKGHEFYNPQKKNYIFLRNAAEELKPRNKK</sequence>
<keyword id="KW-0131">Cell cycle</keyword>
<keyword id="KW-0132">Cell division</keyword>
<keyword id="KW-0963">Cytoplasm</keyword>
<keyword id="KW-0206">Cytoskeleton</keyword>
<keyword id="KW-0498">Mitosis</keyword>
<keyword id="KW-0539">Nucleus</keyword>
<keyword id="KW-0597">Phosphoprotein</keyword>
<keyword id="KW-1185">Reference proteome</keyword>
<keyword id="KW-0677">Repeat</keyword>
<keyword id="KW-0813">Transport</keyword>
<keyword id="KW-0853">WD repeat</keyword>
<comment type="function">
    <text evidence="1">Plays a role in mitotic bipolar spindle formation. Binds mRNA. May function in nucleocytoplasmic transport and in directly or indirectly attaching cytoplasmic mRNPs to the cytoskeleton.</text>
</comment>
<comment type="subunit">
    <text evidence="1">Interacts with NUMA1 (via N-terminal end of the coiled-coil domain); this interaction promotes spindle formation in mitosis (By similarity). Interacts with NUP98 (By similarity). Interacts with MYCBP2 (By similarity). Interacts with USP11 (By similarity).</text>
</comment>
<comment type="subcellular location">
    <subcellularLocation>
        <location evidence="1">Cytoplasm</location>
    </subcellularLocation>
    <subcellularLocation>
        <location evidence="1">Nucleus</location>
    </subcellularLocation>
    <subcellularLocation>
        <location evidence="1">Cytoplasm</location>
        <location evidence="1">Cytoskeleton</location>
        <location evidence="1">Spindle pole</location>
    </subcellularLocation>
    <text evidence="1">Recruited from interphase nuclei to spindle MTs during mitosis.</text>
</comment>
<comment type="similarity">
    <text evidence="3">Belongs to the WD repeat rae1 family.</text>
</comment>